<organism>
    <name type="scientific">Staphylococcus aureus (strain Newman)</name>
    <dbReference type="NCBI Taxonomy" id="426430"/>
    <lineage>
        <taxon>Bacteria</taxon>
        <taxon>Bacillati</taxon>
        <taxon>Bacillota</taxon>
        <taxon>Bacilli</taxon>
        <taxon>Bacillales</taxon>
        <taxon>Staphylococcaceae</taxon>
        <taxon>Staphylococcus</taxon>
    </lineage>
</organism>
<name>Y1636_STAAE</name>
<feature type="chain" id="PRO_1000073558" description="UPF0354 protein NWMN_1636">
    <location>
        <begin position="1"/>
        <end position="285"/>
    </location>
</feature>
<proteinExistence type="inferred from homology"/>
<gene>
    <name type="ordered locus">NWMN_1636</name>
</gene>
<reference key="1">
    <citation type="journal article" date="2008" name="J. Bacteriol.">
        <title>Genome sequence of Staphylococcus aureus strain Newman and comparative analysis of staphylococcal genomes: polymorphism and evolution of two major pathogenicity islands.</title>
        <authorList>
            <person name="Baba T."/>
            <person name="Bae T."/>
            <person name="Schneewind O."/>
            <person name="Takeuchi F."/>
            <person name="Hiramatsu K."/>
        </authorList>
    </citation>
    <scope>NUCLEOTIDE SEQUENCE [LARGE SCALE GENOMIC DNA]</scope>
    <source>
        <strain>Newman</strain>
    </source>
</reference>
<evidence type="ECO:0000255" key="1">
    <source>
        <dbReference type="HAMAP-Rule" id="MF_01548"/>
    </source>
</evidence>
<sequence>MNTFQMRDKLKERLSHLDVDFKFNREEETLRIYRTDNNKGITIKLNAIVAKYEDKKEKIVDEIVYYVDEAIAQMADKTLESISSSQIMPVIRATSFDKKTKQGVPFIYDEHTAETAVYYAVDLGKSYRLIDESMLEDLKLTEQQIREMSLFNVRKLSNSYTTDEVKGNIFYFINSNDGYDASRILNTAFLNEIEAQCQGEMLVAVPHQDVLIIADIRNKTGYDVMAHLTMEFFTKGLVPITSLSFGYKQGHLEPIFILGKNNKQKRDPNVIQRLEANRRKFNKDK</sequence>
<dbReference type="EMBL" id="AP009351">
    <property type="protein sequence ID" value="BAF67908.1"/>
    <property type="molecule type" value="Genomic_DNA"/>
</dbReference>
<dbReference type="RefSeq" id="WP_001091387.1">
    <property type="nucleotide sequence ID" value="NZ_JBBIAE010000009.1"/>
</dbReference>
<dbReference type="KEGG" id="sae:NWMN_1636"/>
<dbReference type="HOGENOM" id="CLU_085634_0_0_9"/>
<dbReference type="Proteomes" id="UP000006386">
    <property type="component" value="Chromosome"/>
</dbReference>
<dbReference type="HAMAP" id="MF_01548">
    <property type="entry name" value="UPF0354"/>
    <property type="match status" value="1"/>
</dbReference>
<dbReference type="InterPro" id="IPR010838">
    <property type="entry name" value="DUF1444"/>
</dbReference>
<dbReference type="NCBIfam" id="NF010189">
    <property type="entry name" value="PRK13668.1"/>
    <property type="match status" value="1"/>
</dbReference>
<dbReference type="Pfam" id="PF07285">
    <property type="entry name" value="DUF1444"/>
    <property type="match status" value="1"/>
</dbReference>
<dbReference type="PIRSF" id="PIRSF012562">
    <property type="entry name" value="UCP012562"/>
    <property type="match status" value="1"/>
</dbReference>
<comment type="similarity">
    <text evidence="1">Belongs to the UPF0354 family.</text>
</comment>
<accession>A6QHS6</accession>
<protein>
    <recommendedName>
        <fullName evidence="1">UPF0354 protein NWMN_1636</fullName>
    </recommendedName>
</protein>